<accession>B5E3C1</accession>
<proteinExistence type="inferred from homology"/>
<protein>
    <recommendedName>
        <fullName evidence="1">Aspartate--tRNA ligase</fullName>
        <ecNumber evidence="1">6.1.1.12</ecNumber>
    </recommendedName>
    <alternativeName>
        <fullName evidence="1">Aspartyl-tRNA synthetase</fullName>
        <shortName evidence="1">AspRS</shortName>
    </alternativeName>
</protein>
<gene>
    <name evidence="1" type="primary">aspS</name>
    <name type="ordered locus">SPG_2051</name>
</gene>
<sequence>MKRSMYAGRVREEHIGQEITLKGWVGRRRDLGGLIFIDLRDREGIMQLVINPEKVSAEVMATAESLRSEFVIEVTGQVAAREQANDKLPTGAVELNVTALIVLNTAKTTPFEIKDGIEANDDTRLRYRYLDLRRPEMLENLKLRAKVTHSIRNYLDELEFIDVETPFLSKSTPEGARDYLVPSRVNKGHFYALPQSPQITKQLLMNAGFDRYYQIVKCFRDEDLRGDRQPEFTQVDLETSFLTEQEIQDITEGLIARVMKETKGIEVTLPFPRMKYDDAMALYGSDKPDTRFDMLLQDLTEVVKGVDFKVFSEALAVKAIVVKGAADNYSRKDIDKMTEVAKQYGAKGLAWVKVVDGELNGPVAKFLTGIQEELTTALALEDKDLVLFVADTLEVANATLGALRGRIAKELGLIDNDKFNFLWVVDWPMFEWSEEEGRYMSAHHPFTLPQEETAHELEGDLAKVRAIAYDIVLNGYELGGGSLRINQKDLQERMFKALGFSAEEANDQFGFLLEAMDYGFPPHGGLAIGLDRFVMLLAGEENIREVIAFPKNNKATDPMTQAPSTVALKQLEELSLQVEEDETNKTN</sequence>
<evidence type="ECO:0000255" key="1">
    <source>
        <dbReference type="HAMAP-Rule" id="MF_00044"/>
    </source>
</evidence>
<feature type="chain" id="PRO_1000091049" description="Aspartate--tRNA ligase">
    <location>
        <begin position="1"/>
        <end position="587"/>
    </location>
</feature>
<feature type="region of interest" description="Aspartate" evidence="1">
    <location>
        <begin position="198"/>
        <end position="201"/>
    </location>
</feature>
<feature type="binding site" evidence="1">
    <location>
        <position position="174"/>
    </location>
    <ligand>
        <name>L-aspartate</name>
        <dbReference type="ChEBI" id="CHEBI:29991"/>
    </ligand>
</feature>
<feature type="binding site" evidence="1">
    <location>
        <begin position="220"/>
        <end position="222"/>
    </location>
    <ligand>
        <name>ATP</name>
        <dbReference type="ChEBI" id="CHEBI:30616"/>
    </ligand>
</feature>
<feature type="binding site" evidence="1">
    <location>
        <position position="220"/>
    </location>
    <ligand>
        <name>L-aspartate</name>
        <dbReference type="ChEBI" id="CHEBI:29991"/>
    </ligand>
</feature>
<feature type="binding site" evidence="1">
    <location>
        <position position="229"/>
    </location>
    <ligand>
        <name>ATP</name>
        <dbReference type="ChEBI" id="CHEBI:30616"/>
    </ligand>
</feature>
<feature type="binding site" evidence="1">
    <location>
        <position position="443"/>
    </location>
    <ligand>
        <name>L-aspartate</name>
        <dbReference type="ChEBI" id="CHEBI:29991"/>
    </ligand>
</feature>
<feature type="binding site" evidence="1">
    <location>
        <position position="477"/>
    </location>
    <ligand>
        <name>ATP</name>
        <dbReference type="ChEBI" id="CHEBI:30616"/>
    </ligand>
</feature>
<feature type="binding site" evidence="1">
    <location>
        <position position="484"/>
    </location>
    <ligand>
        <name>L-aspartate</name>
        <dbReference type="ChEBI" id="CHEBI:29991"/>
    </ligand>
</feature>
<feature type="binding site" evidence="1">
    <location>
        <begin position="529"/>
        <end position="532"/>
    </location>
    <ligand>
        <name>ATP</name>
        <dbReference type="ChEBI" id="CHEBI:30616"/>
    </ligand>
</feature>
<dbReference type="EC" id="6.1.1.12" evidence="1"/>
<dbReference type="EMBL" id="CP001015">
    <property type="protein sequence ID" value="ACF56381.1"/>
    <property type="molecule type" value="Genomic_DNA"/>
</dbReference>
<dbReference type="SMR" id="B5E3C1"/>
<dbReference type="KEGG" id="spx:SPG_2051"/>
<dbReference type="HOGENOM" id="CLU_014330_3_2_9"/>
<dbReference type="GO" id="GO:0005737">
    <property type="term" value="C:cytoplasm"/>
    <property type="evidence" value="ECO:0007669"/>
    <property type="project" value="UniProtKB-SubCell"/>
</dbReference>
<dbReference type="GO" id="GO:0004815">
    <property type="term" value="F:aspartate-tRNA ligase activity"/>
    <property type="evidence" value="ECO:0007669"/>
    <property type="project" value="UniProtKB-UniRule"/>
</dbReference>
<dbReference type="GO" id="GO:0005524">
    <property type="term" value="F:ATP binding"/>
    <property type="evidence" value="ECO:0007669"/>
    <property type="project" value="UniProtKB-UniRule"/>
</dbReference>
<dbReference type="GO" id="GO:0140096">
    <property type="term" value="F:catalytic activity, acting on a protein"/>
    <property type="evidence" value="ECO:0007669"/>
    <property type="project" value="UniProtKB-ARBA"/>
</dbReference>
<dbReference type="GO" id="GO:0003676">
    <property type="term" value="F:nucleic acid binding"/>
    <property type="evidence" value="ECO:0007669"/>
    <property type="project" value="InterPro"/>
</dbReference>
<dbReference type="GO" id="GO:0016740">
    <property type="term" value="F:transferase activity"/>
    <property type="evidence" value="ECO:0007669"/>
    <property type="project" value="UniProtKB-ARBA"/>
</dbReference>
<dbReference type="GO" id="GO:0006422">
    <property type="term" value="P:aspartyl-tRNA aminoacylation"/>
    <property type="evidence" value="ECO:0007669"/>
    <property type="project" value="UniProtKB-UniRule"/>
</dbReference>
<dbReference type="CDD" id="cd00777">
    <property type="entry name" value="AspRS_core"/>
    <property type="match status" value="1"/>
</dbReference>
<dbReference type="CDD" id="cd04317">
    <property type="entry name" value="EcAspRS_like_N"/>
    <property type="match status" value="1"/>
</dbReference>
<dbReference type="Gene3D" id="3.30.930.10">
    <property type="entry name" value="Bira Bifunctional Protein, Domain 2"/>
    <property type="match status" value="1"/>
</dbReference>
<dbReference type="Gene3D" id="3.30.1360.30">
    <property type="entry name" value="GAD-like domain"/>
    <property type="match status" value="1"/>
</dbReference>
<dbReference type="Gene3D" id="2.40.50.140">
    <property type="entry name" value="Nucleic acid-binding proteins"/>
    <property type="match status" value="1"/>
</dbReference>
<dbReference type="HAMAP" id="MF_00044">
    <property type="entry name" value="Asp_tRNA_synth_type1"/>
    <property type="match status" value="1"/>
</dbReference>
<dbReference type="InterPro" id="IPR004364">
    <property type="entry name" value="Aa-tRNA-synt_II"/>
</dbReference>
<dbReference type="InterPro" id="IPR006195">
    <property type="entry name" value="aa-tRNA-synth_II"/>
</dbReference>
<dbReference type="InterPro" id="IPR045864">
    <property type="entry name" value="aa-tRNA-synth_II/BPL/LPL"/>
</dbReference>
<dbReference type="InterPro" id="IPR004524">
    <property type="entry name" value="Asp-tRNA-ligase_1"/>
</dbReference>
<dbReference type="InterPro" id="IPR047089">
    <property type="entry name" value="Asp-tRNA-ligase_1_N"/>
</dbReference>
<dbReference type="InterPro" id="IPR002312">
    <property type="entry name" value="Asp/Asn-tRNA-synth_IIb"/>
</dbReference>
<dbReference type="InterPro" id="IPR047090">
    <property type="entry name" value="AspRS_core"/>
</dbReference>
<dbReference type="InterPro" id="IPR004115">
    <property type="entry name" value="GAD-like_sf"/>
</dbReference>
<dbReference type="InterPro" id="IPR029351">
    <property type="entry name" value="GAD_dom"/>
</dbReference>
<dbReference type="InterPro" id="IPR012340">
    <property type="entry name" value="NA-bd_OB-fold"/>
</dbReference>
<dbReference type="InterPro" id="IPR004365">
    <property type="entry name" value="NA-bd_OB_tRNA"/>
</dbReference>
<dbReference type="NCBIfam" id="TIGR00459">
    <property type="entry name" value="aspS_bact"/>
    <property type="match status" value="1"/>
</dbReference>
<dbReference type="NCBIfam" id="NF001750">
    <property type="entry name" value="PRK00476.1"/>
    <property type="match status" value="1"/>
</dbReference>
<dbReference type="PANTHER" id="PTHR22594:SF5">
    <property type="entry name" value="ASPARTATE--TRNA LIGASE, MITOCHONDRIAL"/>
    <property type="match status" value="1"/>
</dbReference>
<dbReference type="PANTHER" id="PTHR22594">
    <property type="entry name" value="ASPARTYL/LYSYL-TRNA SYNTHETASE"/>
    <property type="match status" value="1"/>
</dbReference>
<dbReference type="Pfam" id="PF02938">
    <property type="entry name" value="GAD"/>
    <property type="match status" value="1"/>
</dbReference>
<dbReference type="Pfam" id="PF00152">
    <property type="entry name" value="tRNA-synt_2"/>
    <property type="match status" value="1"/>
</dbReference>
<dbReference type="Pfam" id="PF01336">
    <property type="entry name" value="tRNA_anti-codon"/>
    <property type="match status" value="1"/>
</dbReference>
<dbReference type="PRINTS" id="PR01042">
    <property type="entry name" value="TRNASYNTHASP"/>
</dbReference>
<dbReference type="SUPFAM" id="SSF55681">
    <property type="entry name" value="Class II aaRS and biotin synthetases"/>
    <property type="match status" value="1"/>
</dbReference>
<dbReference type="SUPFAM" id="SSF55261">
    <property type="entry name" value="GAD domain-like"/>
    <property type="match status" value="1"/>
</dbReference>
<dbReference type="SUPFAM" id="SSF50249">
    <property type="entry name" value="Nucleic acid-binding proteins"/>
    <property type="match status" value="1"/>
</dbReference>
<dbReference type="PROSITE" id="PS50862">
    <property type="entry name" value="AA_TRNA_LIGASE_II"/>
    <property type="match status" value="1"/>
</dbReference>
<organism>
    <name type="scientific">Streptococcus pneumoniae serotype 19F (strain G54)</name>
    <dbReference type="NCBI Taxonomy" id="512566"/>
    <lineage>
        <taxon>Bacteria</taxon>
        <taxon>Bacillati</taxon>
        <taxon>Bacillota</taxon>
        <taxon>Bacilli</taxon>
        <taxon>Lactobacillales</taxon>
        <taxon>Streptococcaceae</taxon>
        <taxon>Streptococcus</taxon>
    </lineage>
</organism>
<name>SYD_STRP4</name>
<reference key="1">
    <citation type="journal article" date="2001" name="Microb. Drug Resist.">
        <title>Annotated draft genomic sequence from a Streptococcus pneumoniae type 19F clinical isolate.</title>
        <authorList>
            <person name="Dopazo J."/>
            <person name="Mendoza A."/>
            <person name="Herrero J."/>
            <person name="Caldara F."/>
            <person name="Humbert Y."/>
            <person name="Friedli L."/>
            <person name="Guerrier M."/>
            <person name="Grand-Schenk E."/>
            <person name="Gandin C."/>
            <person name="de Francesco M."/>
            <person name="Polissi A."/>
            <person name="Buell G."/>
            <person name="Feger G."/>
            <person name="Garcia E."/>
            <person name="Peitsch M."/>
            <person name="Garcia-Bustos J.F."/>
        </authorList>
    </citation>
    <scope>NUCLEOTIDE SEQUENCE [LARGE SCALE GENOMIC DNA]</scope>
    <source>
        <strain>G54</strain>
    </source>
</reference>
<reference key="2">
    <citation type="submission" date="2008-03" db="EMBL/GenBank/DDBJ databases">
        <title>Pneumococcal beta glucoside metabolism investigated by whole genome comparison.</title>
        <authorList>
            <person name="Mulas L."/>
            <person name="Trappetti C."/>
            <person name="Hakenbeck R."/>
            <person name="Iannelli F."/>
            <person name="Pozzi G."/>
            <person name="Davidsen T.M."/>
            <person name="Tettelin H."/>
            <person name="Oggioni M."/>
        </authorList>
    </citation>
    <scope>NUCLEOTIDE SEQUENCE [LARGE SCALE GENOMIC DNA]</scope>
    <source>
        <strain>G54</strain>
    </source>
</reference>
<comment type="function">
    <text evidence="1">Catalyzes the attachment of L-aspartate to tRNA(Asp) in a two-step reaction: L-aspartate is first activated by ATP to form Asp-AMP and then transferred to the acceptor end of tRNA(Asp).</text>
</comment>
<comment type="catalytic activity">
    <reaction evidence="1">
        <text>tRNA(Asp) + L-aspartate + ATP = L-aspartyl-tRNA(Asp) + AMP + diphosphate</text>
        <dbReference type="Rhea" id="RHEA:19649"/>
        <dbReference type="Rhea" id="RHEA-COMP:9660"/>
        <dbReference type="Rhea" id="RHEA-COMP:9678"/>
        <dbReference type="ChEBI" id="CHEBI:29991"/>
        <dbReference type="ChEBI" id="CHEBI:30616"/>
        <dbReference type="ChEBI" id="CHEBI:33019"/>
        <dbReference type="ChEBI" id="CHEBI:78442"/>
        <dbReference type="ChEBI" id="CHEBI:78516"/>
        <dbReference type="ChEBI" id="CHEBI:456215"/>
        <dbReference type="EC" id="6.1.1.12"/>
    </reaction>
</comment>
<comment type="subunit">
    <text evidence="1">Homodimer.</text>
</comment>
<comment type="subcellular location">
    <subcellularLocation>
        <location evidence="1">Cytoplasm</location>
    </subcellularLocation>
</comment>
<comment type="similarity">
    <text evidence="1">Belongs to the class-II aminoacyl-tRNA synthetase family. Type 1 subfamily.</text>
</comment>
<keyword id="KW-0030">Aminoacyl-tRNA synthetase</keyword>
<keyword id="KW-0067">ATP-binding</keyword>
<keyword id="KW-0963">Cytoplasm</keyword>
<keyword id="KW-0436">Ligase</keyword>
<keyword id="KW-0547">Nucleotide-binding</keyword>
<keyword id="KW-0648">Protein biosynthesis</keyword>